<organism>
    <name type="scientific">Methanosarcina mazei (strain ATCC BAA-159 / DSM 3647 / Goe1 / Go1 / JCM 11833 / OCM 88)</name>
    <name type="common">Methanosarcina frisia</name>
    <dbReference type="NCBI Taxonomy" id="192952"/>
    <lineage>
        <taxon>Archaea</taxon>
        <taxon>Methanobacteriati</taxon>
        <taxon>Methanobacteriota</taxon>
        <taxon>Stenosarchaea group</taxon>
        <taxon>Methanomicrobia</taxon>
        <taxon>Methanosarcinales</taxon>
        <taxon>Methanosarcinaceae</taxon>
        <taxon>Methanosarcina</taxon>
    </lineage>
</organism>
<gene>
    <name type="primary">leuA</name>
    <name type="ordered locus">MM_1284</name>
</gene>
<sequence length="516" mass="55799">MYTLKEGIDFYIEPMQSKKVTVFDTTLRDGEQTPGVSLTSTQKLEIAHQLDKLGVDIIEAGFPISSEGDKESVKSISNAGLDTTVCGLARVLKKDIDACFESDVGLVHTFVPTSDVQRIYTIKKSREEVIQLAVEAVQYIKDHGLKCMFSAMDATRTDPEYLIEVFKAVQEAGCDIINVPDTVGVMVPSAMYRQIKGIAAEITIPIDVHCHNDFGLAVANSLMAVEAGASQVQVTINGIGERAGNADLSQTVMSLTSIYGAKTNIRTEYLVETSKMVENYTGIRLPPNTPVVGQNAFSHESGIHSQGVLEKSDTFEPGIMTPEMVGHRRRIVLGKHTGKHAVKQSLESAGIKTNDNQLDEIVIRIKEIANKGKQITDADLYAVASAVLGKASSEEELIKLKEVSVMTGNILTPTAVVKADIEGKEIIAARTGVGPVDAALHAVRDILGESNHFRLQDFRIDAITGGADALADVYIGLENEKGRIVTARSANPDIVMASVEALVNAMNLLYKKENKS</sequence>
<protein>
    <recommendedName>
        <fullName>Probable 2-isopropylmalate synthase</fullName>
        <ecNumber>2.3.3.13</ecNumber>
    </recommendedName>
    <alternativeName>
        <fullName>Alpha-IPM synthase</fullName>
    </alternativeName>
    <alternativeName>
        <fullName>Alpha-isopropylmalate synthase</fullName>
    </alternativeName>
</protein>
<feature type="chain" id="PRO_0000140415" description="Probable 2-isopropylmalate synthase">
    <location>
        <begin position="1"/>
        <end position="516"/>
    </location>
</feature>
<feature type="domain" description="Pyruvate carboxyltransferase" evidence="2">
    <location>
        <begin position="20"/>
        <end position="271"/>
    </location>
</feature>
<reference key="1">
    <citation type="journal article" date="2002" name="J. Mol. Microbiol. Biotechnol.">
        <title>The genome of Methanosarcina mazei: evidence for lateral gene transfer between Bacteria and Archaea.</title>
        <authorList>
            <person name="Deppenmeier U."/>
            <person name="Johann A."/>
            <person name="Hartsch T."/>
            <person name="Merkl R."/>
            <person name="Schmitz R.A."/>
            <person name="Martinez-Arias R."/>
            <person name="Henne A."/>
            <person name="Wiezer A."/>
            <person name="Baeumer S."/>
            <person name="Jacobi C."/>
            <person name="Brueggemann H."/>
            <person name="Lienard T."/>
            <person name="Christmann A."/>
            <person name="Boemecke M."/>
            <person name="Steckel S."/>
            <person name="Bhattacharyya A."/>
            <person name="Lykidis A."/>
            <person name="Overbeek R."/>
            <person name="Klenk H.-P."/>
            <person name="Gunsalus R.P."/>
            <person name="Fritz H.-J."/>
            <person name="Gottschalk G."/>
        </authorList>
    </citation>
    <scope>NUCLEOTIDE SEQUENCE [LARGE SCALE GENOMIC DNA]</scope>
    <source>
        <strain>ATCC BAA-159 / DSM 3647 / Goe1 / Go1 / JCM 11833 / OCM 88</strain>
    </source>
</reference>
<proteinExistence type="inferred from homology"/>
<comment type="function">
    <text evidence="1">Catalyzes the condensation of the acetyl group of acetyl-CoA with 3-methyl-2-oxobutanoate (2-oxoisovalerate) to form 3-carboxy-3-hydroxy-4-methylpentanoate (2-isopropylmalate).</text>
</comment>
<comment type="catalytic activity">
    <reaction>
        <text>3-methyl-2-oxobutanoate + acetyl-CoA + H2O = (2S)-2-isopropylmalate + CoA + H(+)</text>
        <dbReference type="Rhea" id="RHEA:21524"/>
        <dbReference type="ChEBI" id="CHEBI:1178"/>
        <dbReference type="ChEBI" id="CHEBI:11851"/>
        <dbReference type="ChEBI" id="CHEBI:15377"/>
        <dbReference type="ChEBI" id="CHEBI:15378"/>
        <dbReference type="ChEBI" id="CHEBI:57287"/>
        <dbReference type="ChEBI" id="CHEBI:57288"/>
        <dbReference type="EC" id="2.3.3.13"/>
    </reaction>
</comment>
<comment type="pathway">
    <text>Amino-acid biosynthesis; L-leucine biosynthesis; L-leucine from 3-methyl-2-oxobutanoate: step 1/4.</text>
</comment>
<comment type="similarity">
    <text evidence="3">Belongs to the alpha-IPM synthase/homocitrate synthase family.</text>
</comment>
<keyword id="KW-0028">Amino-acid biosynthesis</keyword>
<keyword id="KW-0100">Branched-chain amino acid biosynthesis</keyword>
<keyword id="KW-0432">Leucine biosynthesis</keyword>
<keyword id="KW-0808">Transferase</keyword>
<dbReference type="EC" id="2.3.3.13"/>
<dbReference type="EMBL" id="AE008384">
    <property type="protein sequence ID" value="AAM30980.1"/>
    <property type="molecule type" value="Genomic_DNA"/>
</dbReference>
<dbReference type="RefSeq" id="WP_011033231.1">
    <property type="nucleotide sequence ID" value="NC_003901.1"/>
</dbReference>
<dbReference type="SMR" id="P58968"/>
<dbReference type="KEGG" id="mma:MM_1284"/>
<dbReference type="PATRIC" id="fig|192952.21.peg.1492"/>
<dbReference type="eggNOG" id="arCOG02092">
    <property type="taxonomic scope" value="Archaea"/>
</dbReference>
<dbReference type="HOGENOM" id="CLU_022158_0_1_2"/>
<dbReference type="UniPathway" id="UPA00048">
    <property type="reaction ID" value="UER00070"/>
</dbReference>
<dbReference type="Proteomes" id="UP000000595">
    <property type="component" value="Chromosome"/>
</dbReference>
<dbReference type="GO" id="GO:0003852">
    <property type="term" value="F:2-isopropylmalate synthase activity"/>
    <property type="evidence" value="ECO:0007669"/>
    <property type="project" value="UniProtKB-EC"/>
</dbReference>
<dbReference type="GO" id="GO:0019298">
    <property type="term" value="P:coenzyme B biosynthetic process"/>
    <property type="evidence" value="ECO:0007669"/>
    <property type="project" value="TreeGrafter"/>
</dbReference>
<dbReference type="GO" id="GO:0009098">
    <property type="term" value="P:L-leucine biosynthetic process"/>
    <property type="evidence" value="ECO:0007669"/>
    <property type="project" value="UniProtKB-UniPathway"/>
</dbReference>
<dbReference type="CDD" id="cd07940">
    <property type="entry name" value="DRE_TIM_IPMS"/>
    <property type="match status" value="1"/>
</dbReference>
<dbReference type="FunFam" id="1.10.238.260:FF:000001">
    <property type="entry name" value="2-isopropylmalate synthase"/>
    <property type="match status" value="1"/>
</dbReference>
<dbReference type="FunFam" id="3.20.20.70:FF:000010">
    <property type="entry name" value="2-isopropylmalate synthase"/>
    <property type="match status" value="1"/>
</dbReference>
<dbReference type="FunFam" id="3.30.160.270:FF:000003">
    <property type="entry name" value="2-isopropylmalate synthase"/>
    <property type="match status" value="1"/>
</dbReference>
<dbReference type="Gene3D" id="1.10.238.260">
    <property type="match status" value="1"/>
</dbReference>
<dbReference type="Gene3D" id="3.30.160.270">
    <property type="match status" value="1"/>
</dbReference>
<dbReference type="Gene3D" id="3.20.20.70">
    <property type="entry name" value="Aldolase class I"/>
    <property type="match status" value="1"/>
</dbReference>
<dbReference type="InterPro" id="IPR050073">
    <property type="entry name" value="2-IPM_HCS-like"/>
</dbReference>
<dbReference type="InterPro" id="IPR013709">
    <property type="entry name" value="2-isopropylmalate_synth_dimer"/>
</dbReference>
<dbReference type="InterPro" id="IPR002034">
    <property type="entry name" value="AIPM/Hcit_synth_CS"/>
</dbReference>
<dbReference type="InterPro" id="IPR013785">
    <property type="entry name" value="Aldolase_TIM"/>
</dbReference>
<dbReference type="InterPro" id="IPR011830">
    <property type="entry name" value="LEU1_arch"/>
</dbReference>
<dbReference type="InterPro" id="IPR054691">
    <property type="entry name" value="LeuA/HCS_post-cat"/>
</dbReference>
<dbReference type="InterPro" id="IPR036230">
    <property type="entry name" value="LeuA_allosteric_dom_sf"/>
</dbReference>
<dbReference type="InterPro" id="IPR000891">
    <property type="entry name" value="PYR_CT"/>
</dbReference>
<dbReference type="NCBIfam" id="TIGR02090">
    <property type="entry name" value="LEU1_arch"/>
    <property type="match status" value="1"/>
</dbReference>
<dbReference type="NCBIfam" id="NF002085">
    <property type="entry name" value="PRK00915.1-2"/>
    <property type="match status" value="1"/>
</dbReference>
<dbReference type="NCBIfam" id="NF002086">
    <property type="entry name" value="PRK00915.1-3"/>
    <property type="match status" value="1"/>
</dbReference>
<dbReference type="PANTHER" id="PTHR10277:SF9">
    <property type="entry name" value="2-ISOPROPYLMALATE SYNTHASE 1, CHLOROPLASTIC-RELATED"/>
    <property type="match status" value="1"/>
</dbReference>
<dbReference type="PANTHER" id="PTHR10277">
    <property type="entry name" value="HOMOCITRATE SYNTHASE-RELATED"/>
    <property type="match status" value="1"/>
</dbReference>
<dbReference type="Pfam" id="PF22617">
    <property type="entry name" value="HCS_D2"/>
    <property type="match status" value="1"/>
</dbReference>
<dbReference type="Pfam" id="PF00682">
    <property type="entry name" value="HMGL-like"/>
    <property type="match status" value="1"/>
</dbReference>
<dbReference type="Pfam" id="PF08502">
    <property type="entry name" value="LeuA_dimer"/>
    <property type="match status" value="1"/>
</dbReference>
<dbReference type="SMART" id="SM00917">
    <property type="entry name" value="LeuA_dimer"/>
    <property type="match status" value="1"/>
</dbReference>
<dbReference type="SUPFAM" id="SSF110921">
    <property type="entry name" value="2-isopropylmalate synthase LeuA, allosteric (dimerisation) domain"/>
    <property type="match status" value="1"/>
</dbReference>
<dbReference type="SUPFAM" id="SSF51569">
    <property type="entry name" value="Aldolase"/>
    <property type="match status" value="1"/>
</dbReference>
<dbReference type="PROSITE" id="PS00815">
    <property type="entry name" value="AIPM_HOMOCIT_SYNTH_1"/>
    <property type="match status" value="1"/>
</dbReference>
<dbReference type="PROSITE" id="PS00816">
    <property type="entry name" value="AIPM_HOMOCIT_SYNTH_2"/>
    <property type="match status" value="1"/>
</dbReference>
<dbReference type="PROSITE" id="PS50991">
    <property type="entry name" value="PYR_CT"/>
    <property type="match status" value="1"/>
</dbReference>
<evidence type="ECO:0000250" key="1"/>
<evidence type="ECO:0000255" key="2">
    <source>
        <dbReference type="PROSITE-ProRule" id="PRU01151"/>
    </source>
</evidence>
<evidence type="ECO:0000305" key="3"/>
<accession>P58968</accession>
<name>LEU1_METMA</name>